<protein>
    <recommendedName>
        <fullName evidence="1">Protein ADP-ribosyltransferase PARP3</fullName>
        <ecNumber evidence="1">2.4.2.-</ecNumber>
    </recommendedName>
    <alternativeName>
        <fullName>NAD(+) ADP-ribosyltransferase 3</fullName>
        <shortName>ADPRT-3</shortName>
    </alternativeName>
    <alternativeName>
        <fullName>Poly [ADP-ribose] polymerase 3</fullName>
        <shortName>PARP-3</shortName>
    </alternativeName>
    <alternativeName>
        <fullName>Poly[ADP-ribose] synthase 3</fullName>
    </alternativeName>
</protein>
<organism>
    <name type="scientific">Oryza sativa subsp. japonica</name>
    <name type="common">Rice</name>
    <dbReference type="NCBI Taxonomy" id="39947"/>
    <lineage>
        <taxon>Eukaryota</taxon>
        <taxon>Viridiplantae</taxon>
        <taxon>Streptophyta</taxon>
        <taxon>Embryophyta</taxon>
        <taxon>Tracheophyta</taxon>
        <taxon>Spermatophyta</taxon>
        <taxon>Magnoliopsida</taxon>
        <taxon>Liliopsida</taxon>
        <taxon>Poales</taxon>
        <taxon>Poaceae</taxon>
        <taxon>BOP clade</taxon>
        <taxon>Oryzoideae</taxon>
        <taxon>Oryzeae</taxon>
        <taxon>Oryzinae</taxon>
        <taxon>Oryza</taxon>
        <taxon>Oryza sativa</taxon>
    </lineage>
</organism>
<name>PARP3_ORYSJ</name>
<accession>Q0E0Q3</accession>
<accession>B7ETH1</accession>
<accession>Q6H750</accession>
<keyword id="KW-0013">ADP-ribosylation</keyword>
<keyword id="KW-0328">Glycosyltransferase</keyword>
<keyword id="KW-0479">Metal-binding</keyword>
<keyword id="KW-0520">NAD</keyword>
<keyword id="KW-0548">Nucleotidyltransferase</keyword>
<keyword id="KW-0539">Nucleus</keyword>
<keyword id="KW-1185">Reference proteome</keyword>
<keyword id="KW-0808">Transferase</keyword>
<keyword id="KW-0862">Zinc</keyword>
<keyword id="KW-0863">Zinc-finger</keyword>
<gene>
    <name type="primary">PARP3</name>
    <name type="ordered locus">Os02g0530600</name>
    <name type="ordered locus">LOC_Os02g32860</name>
    <name evidence="10" type="ORF">OsJ_06997</name>
    <name type="ORF">P0476H10.38</name>
</gene>
<reference key="1">
    <citation type="journal article" date="2005" name="Nature">
        <title>The map-based sequence of the rice genome.</title>
        <authorList>
            <consortium name="International rice genome sequencing project (IRGSP)"/>
        </authorList>
    </citation>
    <scope>NUCLEOTIDE SEQUENCE [LARGE SCALE GENOMIC DNA]</scope>
    <source>
        <strain>cv. Nipponbare</strain>
    </source>
</reference>
<reference key="2">
    <citation type="journal article" date="2008" name="Nucleic Acids Res.">
        <title>The rice annotation project database (RAP-DB): 2008 update.</title>
        <authorList>
            <consortium name="The rice annotation project (RAP)"/>
        </authorList>
    </citation>
    <scope>GENOME REANNOTATION</scope>
    <source>
        <strain>cv. Nipponbare</strain>
    </source>
</reference>
<reference key="3">
    <citation type="journal article" date="2013" name="Rice">
        <title>Improvement of the Oryza sativa Nipponbare reference genome using next generation sequence and optical map data.</title>
        <authorList>
            <person name="Kawahara Y."/>
            <person name="de la Bastide M."/>
            <person name="Hamilton J.P."/>
            <person name="Kanamori H."/>
            <person name="McCombie W.R."/>
            <person name="Ouyang S."/>
            <person name="Schwartz D.C."/>
            <person name="Tanaka T."/>
            <person name="Wu J."/>
            <person name="Zhou S."/>
            <person name="Childs K.L."/>
            <person name="Davidson R.M."/>
            <person name="Lin H."/>
            <person name="Quesada-Ocampo L."/>
            <person name="Vaillancourt B."/>
            <person name="Sakai H."/>
            <person name="Lee S.S."/>
            <person name="Kim J."/>
            <person name="Numa H."/>
            <person name="Itoh T."/>
            <person name="Buell C.R."/>
            <person name="Matsumoto T."/>
        </authorList>
    </citation>
    <scope>GENOME REANNOTATION</scope>
    <source>
        <strain>cv. Nipponbare</strain>
    </source>
</reference>
<reference key="4">
    <citation type="journal article" date="2005" name="PLoS Biol.">
        <title>The genomes of Oryza sativa: a history of duplications.</title>
        <authorList>
            <person name="Yu J."/>
            <person name="Wang J."/>
            <person name="Lin W."/>
            <person name="Li S."/>
            <person name="Li H."/>
            <person name="Zhou J."/>
            <person name="Ni P."/>
            <person name="Dong W."/>
            <person name="Hu S."/>
            <person name="Zeng C."/>
            <person name="Zhang J."/>
            <person name="Zhang Y."/>
            <person name="Li R."/>
            <person name="Xu Z."/>
            <person name="Li S."/>
            <person name="Li X."/>
            <person name="Zheng H."/>
            <person name="Cong L."/>
            <person name="Lin L."/>
            <person name="Yin J."/>
            <person name="Geng J."/>
            <person name="Li G."/>
            <person name="Shi J."/>
            <person name="Liu J."/>
            <person name="Lv H."/>
            <person name="Li J."/>
            <person name="Wang J."/>
            <person name="Deng Y."/>
            <person name="Ran L."/>
            <person name="Shi X."/>
            <person name="Wang X."/>
            <person name="Wu Q."/>
            <person name="Li C."/>
            <person name="Ren X."/>
            <person name="Wang J."/>
            <person name="Wang X."/>
            <person name="Li D."/>
            <person name="Liu D."/>
            <person name="Zhang X."/>
            <person name="Ji Z."/>
            <person name="Zhao W."/>
            <person name="Sun Y."/>
            <person name="Zhang Z."/>
            <person name="Bao J."/>
            <person name="Han Y."/>
            <person name="Dong L."/>
            <person name="Ji J."/>
            <person name="Chen P."/>
            <person name="Wu S."/>
            <person name="Liu J."/>
            <person name="Xiao Y."/>
            <person name="Bu D."/>
            <person name="Tan J."/>
            <person name="Yang L."/>
            <person name="Ye C."/>
            <person name="Zhang J."/>
            <person name="Xu J."/>
            <person name="Zhou Y."/>
            <person name="Yu Y."/>
            <person name="Zhang B."/>
            <person name="Zhuang S."/>
            <person name="Wei H."/>
            <person name="Liu B."/>
            <person name="Lei M."/>
            <person name="Yu H."/>
            <person name="Li Y."/>
            <person name="Xu H."/>
            <person name="Wei S."/>
            <person name="He X."/>
            <person name="Fang L."/>
            <person name="Zhang Z."/>
            <person name="Zhang Y."/>
            <person name="Huang X."/>
            <person name="Su Z."/>
            <person name="Tong W."/>
            <person name="Li J."/>
            <person name="Tong Z."/>
            <person name="Li S."/>
            <person name="Ye J."/>
            <person name="Wang L."/>
            <person name="Fang L."/>
            <person name="Lei T."/>
            <person name="Chen C.-S."/>
            <person name="Chen H.-C."/>
            <person name="Xu Z."/>
            <person name="Li H."/>
            <person name="Huang H."/>
            <person name="Zhang F."/>
            <person name="Xu H."/>
            <person name="Li N."/>
            <person name="Zhao C."/>
            <person name="Li S."/>
            <person name="Dong L."/>
            <person name="Huang Y."/>
            <person name="Li L."/>
            <person name="Xi Y."/>
            <person name="Qi Q."/>
            <person name="Li W."/>
            <person name="Zhang B."/>
            <person name="Hu W."/>
            <person name="Zhang Y."/>
            <person name="Tian X."/>
            <person name="Jiao Y."/>
            <person name="Liang X."/>
            <person name="Jin J."/>
            <person name="Gao L."/>
            <person name="Zheng W."/>
            <person name="Hao B."/>
            <person name="Liu S.-M."/>
            <person name="Wang W."/>
            <person name="Yuan L."/>
            <person name="Cao M."/>
            <person name="McDermott J."/>
            <person name="Samudrala R."/>
            <person name="Wang J."/>
            <person name="Wong G.K.-S."/>
            <person name="Yang H."/>
        </authorList>
    </citation>
    <scope>NUCLEOTIDE SEQUENCE [LARGE SCALE GENOMIC DNA]</scope>
    <source>
        <strain>cv. Nipponbare</strain>
    </source>
</reference>
<reference key="5">
    <citation type="journal article" date="2003" name="Science">
        <title>Collection, mapping, and annotation of over 28,000 cDNA clones from japonica rice.</title>
        <authorList>
            <consortium name="The rice full-length cDNA consortium"/>
        </authorList>
    </citation>
    <scope>NUCLEOTIDE SEQUENCE [LARGE SCALE MRNA]</scope>
    <source>
        <strain>cv. Nipponbare</strain>
    </source>
</reference>
<reference key="6">
    <citation type="journal article" date="2016" name="PLoS ONE">
        <title>Linear energy transfer-dependent change in rice gene expression profile after heavy-ion beam irradiation.</title>
        <authorList>
            <person name="Ishii K."/>
            <person name="Kazama Y."/>
            <person name="Morita R."/>
            <person name="Hirano T."/>
            <person name="Ikeda T."/>
            <person name="Usuda S."/>
            <person name="Hayashi Y."/>
            <person name="Ohbu S."/>
            <person name="Motoyama R."/>
            <person name="Nagamura Y."/>
            <person name="Abe T."/>
        </authorList>
    </citation>
    <scope>INDUCTION BY HEAVY ION IRRADIATION</scope>
</reference>
<feature type="chain" id="PRO_0000260505" description="Protein ADP-ribosyltransferase PARP3">
    <location>
        <begin position="1"/>
        <end position="831"/>
    </location>
</feature>
<feature type="domain" description="PADR1 zinc-binding" evidence="6">
    <location>
        <begin position="49"/>
        <end position="199"/>
    </location>
</feature>
<feature type="domain" description="BRCT" evidence="2">
    <location>
        <begin position="200"/>
        <end position="290"/>
    </location>
</feature>
<feature type="domain" description="WGR" evidence="5">
    <location>
        <begin position="338"/>
        <end position="439"/>
    </location>
</feature>
<feature type="domain" description="PARP alpha-helical" evidence="4">
    <location>
        <begin position="466"/>
        <end position="585"/>
    </location>
</feature>
<feature type="domain" description="PARP catalytic" evidence="3">
    <location>
        <begin position="594"/>
        <end position="827"/>
    </location>
</feature>
<feature type="region of interest" description="Disordered" evidence="7">
    <location>
        <begin position="1"/>
        <end position="69"/>
    </location>
</feature>
<feature type="region of interest" description="Zinc ribbon" evidence="6">
    <location>
        <begin position="124"/>
        <end position="168"/>
    </location>
</feature>
<feature type="compositionally biased region" description="Basic and acidic residues" evidence="7">
    <location>
        <begin position="15"/>
        <end position="32"/>
    </location>
</feature>
<feature type="compositionally biased region" description="Basic and acidic residues" evidence="7">
    <location>
        <begin position="43"/>
        <end position="66"/>
    </location>
</feature>
<feature type="binding site" evidence="6">
    <location>
        <position position="129"/>
    </location>
    <ligand>
        <name>Zn(2+)</name>
        <dbReference type="ChEBI" id="CHEBI:29105"/>
    </ligand>
</feature>
<feature type="binding site" evidence="6">
    <location>
        <position position="132"/>
    </location>
    <ligand>
        <name>Zn(2+)</name>
        <dbReference type="ChEBI" id="CHEBI:29105"/>
    </ligand>
</feature>
<feature type="binding site" evidence="6">
    <location>
        <position position="145"/>
    </location>
    <ligand>
        <name>Zn(2+)</name>
        <dbReference type="ChEBI" id="CHEBI:29105"/>
    </ligand>
</feature>
<feature type="binding site" evidence="6">
    <location>
        <position position="155"/>
    </location>
    <ligand>
        <name>Zn(2+)</name>
        <dbReference type="ChEBI" id="CHEBI:29105"/>
    </ligand>
</feature>
<comment type="function">
    <text evidence="1">Involved in the base excision repair (BER) pathway, by catalyzing the poly(ADP-ribosyl)ation of a limited number of acceptor proteins involved in chromatin architecture and in DNA metabolism. This modification follows DNA damages and appears as an obligatory step in a detection/signaling pathway leading to the reparation of DNA strand breaks (By similarity).</text>
</comment>
<comment type="catalytic activity">
    <reaction evidence="1">
        <text>L-aspartyl-[protein] + NAD(+) = 4-O-(ADP-D-ribosyl)-L-aspartyl-[protein] + nicotinamide</text>
        <dbReference type="Rhea" id="RHEA:54424"/>
        <dbReference type="Rhea" id="RHEA-COMP:9867"/>
        <dbReference type="Rhea" id="RHEA-COMP:13832"/>
        <dbReference type="ChEBI" id="CHEBI:17154"/>
        <dbReference type="ChEBI" id="CHEBI:29961"/>
        <dbReference type="ChEBI" id="CHEBI:57540"/>
        <dbReference type="ChEBI" id="CHEBI:138102"/>
    </reaction>
</comment>
<comment type="catalytic activity">
    <reaction evidence="1">
        <text>L-glutamyl-[protein] + NAD(+) = 5-O-(ADP-D-ribosyl)-L-glutamyl-[protein] + nicotinamide</text>
        <dbReference type="Rhea" id="RHEA:58224"/>
        <dbReference type="Rhea" id="RHEA-COMP:10208"/>
        <dbReference type="Rhea" id="RHEA-COMP:15089"/>
        <dbReference type="ChEBI" id="CHEBI:17154"/>
        <dbReference type="ChEBI" id="CHEBI:29973"/>
        <dbReference type="ChEBI" id="CHEBI:57540"/>
        <dbReference type="ChEBI" id="CHEBI:142540"/>
    </reaction>
</comment>
<comment type="subcellular location">
    <subcellularLocation>
        <location evidence="9">Nucleus</location>
    </subcellularLocation>
</comment>
<comment type="induction">
    <text evidence="8">Induced by heavy ion irradiation.</text>
</comment>
<comment type="similarity">
    <text evidence="6 9">Belongs to the ARTD/PARP family.</text>
</comment>
<comment type="sequence caution" evidence="9">
    <conflict type="erroneous gene model prediction">
        <sequence resource="EMBL-CDS" id="BAD25449"/>
    </conflict>
</comment>
<proteinExistence type="evidence at transcript level"/>
<dbReference type="EC" id="2.4.2.-" evidence="1"/>
<dbReference type="EMBL" id="AP004790">
    <property type="protein sequence ID" value="BAD25449.1"/>
    <property type="status" value="ALT_SEQ"/>
    <property type="molecule type" value="Genomic_DNA"/>
</dbReference>
<dbReference type="EMBL" id="AP008208">
    <property type="protein sequence ID" value="BAF08935.1"/>
    <property type="molecule type" value="Genomic_DNA"/>
</dbReference>
<dbReference type="EMBL" id="AP014958">
    <property type="protein sequence ID" value="BAS79031.1"/>
    <property type="molecule type" value="Genomic_DNA"/>
</dbReference>
<dbReference type="EMBL" id="CM000139">
    <property type="protein sequence ID" value="EEE57119.1"/>
    <property type="molecule type" value="Genomic_DNA"/>
</dbReference>
<dbReference type="EMBL" id="AK102681">
    <property type="protein sequence ID" value="BAG95668.1"/>
    <property type="molecule type" value="mRNA"/>
</dbReference>
<dbReference type="RefSeq" id="XP_015623193.1">
    <property type="nucleotide sequence ID" value="XM_015767707.1"/>
</dbReference>
<dbReference type="RefSeq" id="XP_015623194.1">
    <property type="nucleotide sequence ID" value="XM_015767708.1"/>
</dbReference>
<dbReference type="SMR" id="Q0E0Q3"/>
<dbReference type="FunCoup" id="Q0E0Q3">
    <property type="interactions" value="187"/>
</dbReference>
<dbReference type="STRING" id="39947.Q0E0Q3"/>
<dbReference type="PaxDb" id="39947-Q0E0Q3"/>
<dbReference type="EnsemblPlants" id="Os02t0530600-01">
    <property type="protein sequence ID" value="Os02t0530600-01"/>
    <property type="gene ID" value="Os02g0530600"/>
</dbReference>
<dbReference type="Gramene" id="Os02t0530600-01">
    <property type="protein sequence ID" value="Os02t0530600-01"/>
    <property type="gene ID" value="Os02g0530600"/>
</dbReference>
<dbReference type="KEGG" id="dosa:Os02g0530600"/>
<dbReference type="eggNOG" id="KOG1037">
    <property type="taxonomic scope" value="Eukaryota"/>
</dbReference>
<dbReference type="HOGENOM" id="CLU_004841_0_1_1"/>
<dbReference type="InParanoid" id="Q0E0Q3"/>
<dbReference type="OMA" id="TRPFIFR"/>
<dbReference type="OrthoDB" id="429950at2759"/>
<dbReference type="Proteomes" id="UP000000763">
    <property type="component" value="Chromosome 2"/>
</dbReference>
<dbReference type="Proteomes" id="UP000007752">
    <property type="component" value="Chromosome 2"/>
</dbReference>
<dbReference type="Proteomes" id="UP000059680">
    <property type="component" value="Chromosome 2"/>
</dbReference>
<dbReference type="ExpressionAtlas" id="Q0E0Q3">
    <property type="expression patterns" value="baseline and differential"/>
</dbReference>
<dbReference type="GO" id="GO:0005730">
    <property type="term" value="C:nucleolus"/>
    <property type="evidence" value="ECO:0000318"/>
    <property type="project" value="GO_Central"/>
</dbReference>
<dbReference type="GO" id="GO:0003950">
    <property type="term" value="F:NAD+ poly-ADP-ribosyltransferase activity"/>
    <property type="evidence" value="ECO:0000318"/>
    <property type="project" value="GO_Central"/>
</dbReference>
<dbReference type="GO" id="GO:0140806">
    <property type="term" value="F:NAD+-protein-aspartate ADP-ribosyltransferase activity"/>
    <property type="evidence" value="ECO:0007669"/>
    <property type="project" value="RHEA"/>
</dbReference>
<dbReference type="GO" id="GO:0140807">
    <property type="term" value="F:NAD+-protein-glutamate ADP-ribosyltransferase activity"/>
    <property type="evidence" value="ECO:0007669"/>
    <property type="project" value="RHEA"/>
</dbReference>
<dbReference type="GO" id="GO:0016779">
    <property type="term" value="F:nucleotidyltransferase activity"/>
    <property type="evidence" value="ECO:0007669"/>
    <property type="project" value="UniProtKB-KW"/>
</dbReference>
<dbReference type="GO" id="GO:0008270">
    <property type="term" value="F:zinc ion binding"/>
    <property type="evidence" value="ECO:0007669"/>
    <property type="project" value="UniProtKB-KW"/>
</dbReference>
<dbReference type="GO" id="GO:0006302">
    <property type="term" value="P:double-strand break repair"/>
    <property type="evidence" value="ECO:0000318"/>
    <property type="project" value="GO_Central"/>
</dbReference>
<dbReference type="CDD" id="cd17747">
    <property type="entry name" value="BRCT_PARP1"/>
    <property type="match status" value="1"/>
</dbReference>
<dbReference type="CDD" id="cd01437">
    <property type="entry name" value="parp_like"/>
    <property type="match status" value="1"/>
</dbReference>
<dbReference type="FunFam" id="1.20.142.10:FF:000004">
    <property type="entry name" value="Poly [ADP-ribose] polymerase"/>
    <property type="match status" value="1"/>
</dbReference>
<dbReference type="FunFam" id="3.40.50.10190:FF:000039">
    <property type="entry name" value="Poly [ADP-ribose] polymerase"/>
    <property type="match status" value="1"/>
</dbReference>
<dbReference type="FunFam" id="3.90.228.10:FF:000010">
    <property type="entry name" value="Poly [ADP-ribose] polymerase"/>
    <property type="match status" value="1"/>
</dbReference>
<dbReference type="FunFam" id="3.90.640.80:FF:000001">
    <property type="entry name" value="Poly [ADP-ribose] polymerase"/>
    <property type="match status" value="1"/>
</dbReference>
<dbReference type="Gene3D" id="3.90.228.10">
    <property type="match status" value="1"/>
</dbReference>
<dbReference type="Gene3D" id="3.90.640.80">
    <property type="match status" value="1"/>
</dbReference>
<dbReference type="Gene3D" id="3.40.50.10190">
    <property type="entry name" value="BRCT domain"/>
    <property type="match status" value="1"/>
</dbReference>
<dbReference type="Gene3D" id="1.20.142.10">
    <property type="entry name" value="Poly(ADP-ribose) polymerase, regulatory domain"/>
    <property type="match status" value="1"/>
</dbReference>
<dbReference type="InterPro" id="IPR050800">
    <property type="entry name" value="ARTD/PARP"/>
</dbReference>
<dbReference type="InterPro" id="IPR001357">
    <property type="entry name" value="BRCT_dom"/>
</dbReference>
<dbReference type="InterPro" id="IPR036420">
    <property type="entry name" value="BRCT_dom_sf"/>
</dbReference>
<dbReference type="InterPro" id="IPR049296">
    <property type="entry name" value="PARP1-like_PADR1_N"/>
</dbReference>
<dbReference type="InterPro" id="IPR012982">
    <property type="entry name" value="PARP1-like_PADR1_Zn_ribbon"/>
</dbReference>
<dbReference type="InterPro" id="IPR012317">
    <property type="entry name" value="Poly(ADP-ribose)pol_cat_dom"/>
</dbReference>
<dbReference type="InterPro" id="IPR004102">
    <property type="entry name" value="Poly(ADP-ribose)pol_reg_dom"/>
</dbReference>
<dbReference type="InterPro" id="IPR036616">
    <property type="entry name" value="Poly(ADP-ribose)pol_reg_dom_sf"/>
</dbReference>
<dbReference type="InterPro" id="IPR036930">
    <property type="entry name" value="WGR_dom_sf"/>
</dbReference>
<dbReference type="InterPro" id="IPR008893">
    <property type="entry name" value="WGR_domain"/>
</dbReference>
<dbReference type="PANTHER" id="PTHR10459">
    <property type="entry name" value="DNA LIGASE"/>
    <property type="match status" value="1"/>
</dbReference>
<dbReference type="PANTHER" id="PTHR10459:SF106">
    <property type="entry name" value="PROTEIN ADP-RIBOSYLTRANSFERASE PARP3"/>
    <property type="match status" value="1"/>
</dbReference>
<dbReference type="Pfam" id="PF00533">
    <property type="entry name" value="BRCT"/>
    <property type="match status" value="1"/>
</dbReference>
<dbReference type="Pfam" id="PF21728">
    <property type="entry name" value="PADR1_N"/>
    <property type="match status" value="1"/>
</dbReference>
<dbReference type="Pfam" id="PF00644">
    <property type="entry name" value="PARP"/>
    <property type="match status" value="1"/>
</dbReference>
<dbReference type="Pfam" id="PF02877">
    <property type="entry name" value="PARP_reg"/>
    <property type="match status" value="1"/>
</dbReference>
<dbReference type="Pfam" id="PF08063">
    <property type="entry name" value="Zn_ribbon_PADR1"/>
    <property type="match status" value="1"/>
</dbReference>
<dbReference type="SMART" id="SM00292">
    <property type="entry name" value="BRCT"/>
    <property type="match status" value="1"/>
</dbReference>
<dbReference type="SMART" id="SM01335">
    <property type="entry name" value="PADR1"/>
    <property type="match status" value="1"/>
</dbReference>
<dbReference type="SMART" id="SM00773">
    <property type="entry name" value="WGR"/>
    <property type="match status" value="1"/>
</dbReference>
<dbReference type="SUPFAM" id="SSF56399">
    <property type="entry name" value="ADP-ribosylation"/>
    <property type="match status" value="1"/>
</dbReference>
<dbReference type="SUPFAM" id="SSF52113">
    <property type="entry name" value="BRCT domain"/>
    <property type="match status" value="1"/>
</dbReference>
<dbReference type="SUPFAM" id="SSF47587">
    <property type="entry name" value="Domain of poly(ADP-ribose) polymerase"/>
    <property type="match status" value="1"/>
</dbReference>
<dbReference type="SUPFAM" id="SSF142921">
    <property type="entry name" value="WGR domain-like"/>
    <property type="match status" value="1"/>
</dbReference>
<dbReference type="PROSITE" id="PS50172">
    <property type="entry name" value="BRCT"/>
    <property type="match status" value="1"/>
</dbReference>
<dbReference type="PROSITE" id="PS52007">
    <property type="entry name" value="PADR1"/>
    <property type="match status" value="1"/>
</dbReference>
<dbReference type="PROSITE" id="PS51060">
    <property type="entry name" value="PARP_ALPHA_HD"/>
    <property type="match status" value="1"/>
</dbReference>
<dbReference type="PROSITE" id="PS51059">
    <property type="entry name" value="PARP_CATALYTIC"/>
    <property type="match status" value="1"/>
</dbReference>
<dbReference type="PROSITE" id="PS51977">
    <property type="entry name" value="WGR"/>
    <property type="match status" value="1"/>
</dbReference>
<sequence>MVHETRSRTLAASQEEGKAAPKKQKTESKEQEGGQQAPSKNKKTADNEEHDGEQEPSKNKKLKAEESDLNGKATAVKEFSEFCKAIREHLTIEDMRKILQGNEQDASGSEDAVVPRCEDVMFYGPLDKCPVCGGQLECKGLKYNCTGTHSEWACCSFSTNNPSRRGGPIKVPDDVKNDFVRKWLKQQEGNKYPKRNLDDEGIFSGMMIALSGRMSRSHGYFKEQIMKHGGKVNNSVIGVTCVVASPAERHQGGSGGFAEALERGTPVVSENWIIDSVQKKEKQPLAAYDIASDVVPEGRGLPLGNLDPTEEAIETLAAELKLAGKRAVHKDSKLEKDGGHIYEKDGIIYNCAFSVCDLGGDINQLCIMQLIMVPENHLHLYYKKGPIGHDQMAEERVEDFGSRFNDAIKEFVRLFEEVTGNEFEPWEREKKFKKKCMKMYPLDMDDGVDVRHGGVALRQLGAAAAHCKLDPSVTFIMKQLCSQEIYRYALTEMGHDVPDLPIGMLTDLHLKRGEETLLEWKQDVESAPESGPAADAFWMEISNKWFTLFPTTRPYTMKGYEQIADNVASGLETVRDINVASRLIGDVFGSTLDDPLSQCYKKLGCSINRVVEDSEDYKMILKYLEKTYEPVKVGDVVYSATVERIYAVESSALPSYDEIKKLPNKVLLWCGTRSSNLLRHLRDGFVPAVCHIPVPGYMFGKAIVCSDAAAEAALYGFTAVDRPEGYLVLAVASLGKEIQEITGTPGSEDVKRMEEKKMGVKGVGRKTTDPSEHFTWRDGVTVPCGKLVPSTNKDGPLEYNEYAVYDPKQVSIAFLVGVKYEEQNMEVVPDE</sequence>
<evidence type="ECO:0000250" key="1">
    <source>
        <dbReference type="UniProtKB" id="Q9Y6F1"/>
    </source>
</evidence>
<evidence type="ECO:0000255" key="2">
    <source>
        <dbReference type="PROSITE-ProRule" id="PRU00033"/>
    </source>
</evidence>
<evidence type="ECO:0000255" key="3">
    <source>
        <dbReference type="PROSITE-ProRule" id="PRU00397"/>
    </source>
</evidence>
<evidence type="ECO:0000255" key="4">
    <source>
        <dbReference type="PROSITE-ProRule" id="PRU00398"/>
    </source>
</evidence>
<evidence type="ECO:0000255" key="5">
    <source>
        <dbReference type="PROSITE-ProRule" id="PRU01321"/>
    </source>
</evidence>
<evidence type="ECO:0000255" key="6">
    <source>
        <dbReference type="PROSITE-ProRule" id="PRU01351"/>
    </source>
</evidence>
<evidence type="ECO:0000256" key="7">
    <source>
        <dbReference type="SAM" id="MobiDB-lite"/>
    </source>
</evidence>
<evidence type="ECO:0000269" key="8">
    <source>
    </source>
</evidence>
<evidence type="ECO:0000305" key="9"/>
<evidence type="ECO:0000312" key="10">
    <source>
        <dbReference type="EMBL" id="EEE57119.1"/>
    </source>
</evidence>